<dbReference type="EMBL" id="CP001348">
    <property type="protein sequence ID" value="ACL74703.1"/>
    <property type="molecule type" value="Genomic_DNA"/>
</dbReference>
<dbReference type="RefSeq" id="WP_012634768.1">
    <property type="nucleotide sequence ID" value="NC_011898.1"/>
</dbReference>
<dbReference type="SMR" id="B8I5N6"/>
<dbReference type="STRING" id="394503.Ccel_0316"/>
<dbReference type="KEGG" id="cce:Ccel_0316"/>
<dbReference type="eggNOG" id="COG0049">
    <property type="taxonomic scope" value="Bacteria"/>
</dbReference>
<dbReference type="HOGENOM" id="CLU_072226_1_1_9"/>
<dbReference type="OrthoDB" id="9807653at2"/>
<dbReference type="Proteomes" id="UP000001349">
    <property type="component" value="Chromosome"/>
</dbReference>
<dbReference type="GO" id="GO:0015935">
    <property type="term" value="C:small ribosomal subunit"/>
    <property type="evidence" value="ECO:0007669"/>
    <property type="project" value="InterPro"/>
</dbReference>
<dbReference type="GO" id="GO:0019843">
    <property type="term" value="F:rRNA binding"/>
    <property type="evidence" value="ECO:0007669"/>
    <property type="project" value="UniProtKB-UniRule"/>
</dbReference>
<dbReference type="GO" id="GO:0003735">
    <property type="term" value="F:structural constituent of ribosome"/>
    <property type="evidence" value="ECO:0007669"/>
    <property type="project" value="InterPro"/>
</dbReference>
<dbReference type="GO" id="GO:0000049">
    <property type="term" value="F:tRNA binding"/>
    <property type="evidence" value="ECO:0007669"/>
    <property type="project" value="UniProtKB-UniRule"/>
</dbReference>
<dbReference type="GO" id="GO:0006412">
    <property type="term" value="P:translation"/>
    <property type="evidence" value="ECO:0007669"/>
    <property type="project" value="UniProtKB-UniRule"/>
</dbReference>
<dbReference type="CDD" id="cd14869">
    <property type="entry name" value="uS7_Bacteria"/>
    <property type="match status" value="1"/>
</dbReference>
<dbReference type="FunFam" id="1.10.455.10:FF:000001">
    <property type="entry name" value="30S ribosomal protein S7"/>
    <property type="match status" value="1"/>
</dbReference>
<dbReference type="Gene3D" id="1.10.455.10">
    <property type="entry name" value="Ribosomal protein S7 domain"/>
    <property type="match status" value="1"/>
</dbReference>
<dbReference type="HAMAP" id="MF_00480_B">
    <property type="entry name" value="Ribosomal_uS7_B"/>
    <property type="match status" value="1"/>
</dbReference>
<dbReference type="InterPro" id="IPR000235">
    <property type="entry name" value="Ribosomal_uS7"/>
</dbReference>
<dbReference type="InterPro" id="IPR005717">
    <property type="entry name" value="Ribosomal_uS7_bac/org-type"/>
</dbReference>
<dbReference type="InterPro" id="IPR020606">
    <property type="entry name" value="Ribosomal_uS7_CS"/>
</dbReference>
<dbReference type="InterPro" id="IPR023798">
    <property type="entry name" value="Ribosomal_uS7_dom"/>
</dbReference>
<dbReference type="InterPro" id="IPR036823">
    <property type="entry name" value="Ribosomal_uS7_dom_sf"/>
</dbReference>
<dbReference type="NCBIfam" id="TIGR01029">
    <property type="entry name" value="rpsG_bact"/>
    <property type="match status" value="1"/>
</dbReference>
<dbReference type="PANTHER" id="PTHR11205">
    <property type="entry name" value="RIBOSOMAL PROTEIN S7"/>
    <property type="match status" value="1"/>
</dbReference>
<dbReference type="Pfam" id="PF00177">
    <property type="entry name" value="Ribosomal_S7"/>
    <property type="match status" value="1"/>
</dbReference>
<dbReference type="PIRSF" id="PIRSF002122">
    <property type="entry name" value="RPS7p_RPS7a_RPS5e_RPS7o"/>
    <property type="match status" value="1"/>
</dbReference>
<dbReference type="SUPFAM" id="SSF47973">
    <property type="entry name" value="Ribosomal protein S7"/>
    <property type="match status" value="1"/>
</dbReference>
<dbReference type="PROSITE" id="PS00052">
    <property type="entry name" value="RIBOSOMAL_S7"/>
    <property type="match status" value="1"/>
</dbReference>
<organism>
    <name type="scientific">Ruminiclostridium cellulolyticum (strain ATCC 35319 / DSM 5812 / JCM 6584 / H10)</name>
    <name type="common">Clostridium cellulolyticum</name>
    <dbReference type="NCBI Taxonomy" id="394503"/>
    <lineage>
        <taxon>Bacteria</taxon>
        <taxon>Bacillati</taxon>
        <taxon>Bacillota</taxon>
        <taxon>Clostridia</taxon>
        <taxon>Eubacteriales</taxon>
        <taxon>Oscillospiraceae</taxon>
        <taxon>Ruminiclostridium</taxon>
    </lineage>
</organism>
<feature type="chain" id="PRO_1000135593" description="Small ribosomal subunit protein uS7">
    <location>
        <begin position="1"/>
        <end position="156"/>
    </location>
</feature>
<sequence length="156" mass="17985">MPRKGHISKRDVLPDPIYGSKTVTKLINNVMYDGKKGIAQQICYDAFDIIKEKTGRDPLEVFEEAMANIMPVLEVKARRVGGATYQVPMEVRPDRRQALGLRWLVDYSRKRGERTMRERLSGEILDAINNMGGAYKKKEDTHKMAEANRAFAHYRW</sequence>
<reference key="1">
    <citation type="submission" date="2009-01" db="EMBL/GenBank/DDBJ databases">
        <title>Complete sequence of Clostridium cellulolyticum H10.</title>
        <authorList>
            <consortium name="US DOE Joint Genome Institute"/>
            <person name="Lucas S."/>
            <person name="Copeland A."/>
            <person name="Lapidus A."/>
            <person name="Glavina del Rio T."/>
            <person name="Dalin E."/>
            <person name="Tice H."/>
            <person name="Bruce D."/>
            <person name="Goodwin L."/>
            <person name="Pitluck S."/>
            <person name="Chertkov O."/>
            <person name="Saunders E."/>
            <person name="Brettin T."/>
            <person name="Detter J.C."/>
            <person name="Han C."/>
            <person name="Larimer F."/>
            <person name="Land M."/>
            <person name="Hauser L."/>
            <person name="Kyrpides N."/>
            <person name="Ivanova N."/>
            <person name="Zhou J."/>
            <person name="Richardson P."/>
        </authorList>
    </citation>
    <scope>NUCLEOTIDE SEQUENCE [LARGE SCALE GENOMIC DNA]</scope>
    <source>
        <strain>ATCC 35319 / DSM 5812 / JCM 6584 / H10</strain>
    </source>
</reference>
<accession>B8I5N6</accession>
<evidence type="ECO:0000255" key="1">
    <source>
        <dbReference type="HAMAP-Rule" id="MF_00480"/>
    </source>
</evidence>
<evidence type="ECO:0000305" key="2"/>
<comment type="function">
    <text evidence="1">One of the primary rRNA binding proteins, it binds directly to 16S rRNA where it nucleates assembly of the head domain of the 30S subunit. Is located at the subunit interface close to the decoding center, probably blocks exit of the E-site tRNA.</text>
</comment>
<comment type="subunit">
    <text evidence="1">Part of the 30S ribosomal subunit. Contacts proteins S9 and S11.</text>
</comment>
<comment type="similarity">
    <text evidence="1">Belongs to the universal ribosomal protein uS7 family.</text>
</comment>
<name>RS7_RUMCH</name>
<gene>
    <name evidence="1" type="primary">rpsG</name>
    <name type="ordered locus">Ccel_0316</name>
</gene>
<proteinExistence type="inferred from homology"/>
<protein>
    <recommendedName>
        <fullName evidence="1">Small ribosomal subunit protein uS7</fullName>
    </recommendedName>
    <alternativeName>
        <fullName evidence="2">30S ribosomal protein S7</fullName>
    </alternativeName>
</protein>
<keyword id="KW-1185">Reference proteome</keyword>
<keyword id="KW-0687">Ribonucleoprotein</keyword>
<keyword id="KW-0689">Ribosomal protein</keyword>
<keyword id="KW-0694">RNA-binding</keyword>
<keyword id="KW-0699">rRNA-binding</keyword>
<keyword id="KW-0820">tRNA-binding</keyword>